<keyword id="KW-0067">ATP-binding</keyword>
<keyword id="KW-0418">Kinase</keyword>
<keyword id="KW-0460">Magnesium</keyword>
<keyword id="KW-0479">Metal-binding</keyword>
<keyword id="KW-0547">Nucleotide-binding</keyword>
<keyword id="KW-1185">Reference proteome</keyword>
<keyword id="KW-0784">Thiamine biosynthesis</keyword>
<keyword id="KW-0808">Transferase</keyword>
<dbReference type="EC" id="2.7.1.50" evidence="1"/>
<dbReference type="EMBL" id="CP000559">
    <property type="protein sequence ID" value="ABN07817.1"/>
    <property type="molecule type" value="Genomic_DNA"/>
</dbReference>
<dbReference type="RefSeq" id="WP_011834020.1">
    <property type="nucleotide sequence ID" value="NC_008942.1"/>
</dbReference>
<dbReference type="SMR" id="A2SU11"/>
<dbReference type="STRING" id="410358.Mlab_1656"/>
<dbReference type="GeneID" id="4794660"/>
<dbReference type="KEGG" id="mla:Mlab_1656"/>
<dbReference type="eggNOG" id="arCOG00019">
    <property type="taxonomic scope" value="Archaea"/>
</dbReference>
<dbReference type="HOGENOM" id="CLU_019943_0_1_2"/>
<dbReference type="OrthoDB" id="214286at2157"/>
<dbReference type="UniPathway" id="UPA00060">
    <property type="reaction ID" value="UER00139"/>
</dbReference>
<dbReference type="Proteomes" id="UP000000365">
    <property type="component" value="Chromosome"/>
</dbReference>
<dbReference type="GO" id="GO:0005524">
    <property type="term" value="F:ATP binding"/>
    <property type="evidence" value="ECO:0007669"/>
    <property type="project" value="UniProtKB-UniRule"/>
</dbReference>
<dbReference type="GO" id="GO:0004417">
    <property type="term" value="F:hydroxyethylthiazole kinase activity"/>
    <property type="evidence" value="ECO:0007669"/>
    <property type="project" value="UniProtKB-UniRule"/>
</dbReference>
<dbReference type="GO" id="GO:0000287">
    <property type="term" value="F:magnesium ion binding"/>
    <property type="evidence" value="ECO:0007669"/>
    <property type="project" value="UniProtKB-UniRule"/>
</dbReference>
<dbReference type="GO" id="GO:0009228">
    <property type="term" value="P:thiamine biosynthetic process"/>
    <property type="evidence" value="ECO:0007669"/>
    <property type="project" value="UniProtKB-KW"/>
</dbReference>
<dbReference type="GO" id="GO:0009229">
    <property type="term" value="P:thiamine diphosphate biosynthetic process"/>
    <property type="evidence" value="ECO:0007669"/>
    <property type="project" value="UniProtKB-UniRule"/>
</dbReference>
<dbReference type="CDD" id="cd01170">
    <property type="entry name" value="THZ_kinase"/>
    <property type="match status" value="1"/>
</dbReference>
<dbReference type="Gene3D" id="3.40.1190.20">
    <property type="match status" value="1"/>
</dbReference>
<dbReference type="HAMAP" id="MF_00228">
    <property type="entry name" value="Thz_kinase"/>
    <property type="match status" value="1"/>
</dbReference>
<dbReference type="InterPro" id="IPR000417">
    <property type="entry name" value="Hyethyz_kinase"/>
</dbReference>
<dbReference type="InterPro" id="IPR029056">
    <property type="entry name" value="Ribokinase-like"/>
</dbReference>
<dbReference type="NCBIfam" id="NF006830">
    <property type="entry name" value="PRK09355.1"/>
    <property type="match status" value="1"/>
</dbReference>
<dbReference type="NCBIfam" id="TIGR00694">
    <property type="entry name" value="thiM"/>
    <property type="match status" value="1"/>
</dbReference>
<dbReference type="Pfam" id="PF02110">
    <property type="entry name" value="HK"/>
    <property type="match status" value="1"/>
</dbReference>
<dbReference type="PIRSF" id="PIRSF000513">
    <property type="entry name" value="Thz_kinase"/>
    <property type="match status" value="1"/>
</dbReference>
<dbReference type="PRINTS" id="PR01099">
    <property type="entry name" value="HYETHTZKNASE"/>
</dbReference>
<dbReference type="SUPFAM" id="SSF53613">
    <property type="entry name" value="Ribokinase-like"/>
    <property type="match status" value="1"/>
</dbReference>
<name>THIM_METLZ</name>
<comment type="function">
    <text evidence="1">Catalyzes the phosphorylation of the hydroxyl group of 4-methyl-5-beta-hydroxyethylthiazole (THZ).</text>
</comment>
<comment type="catalytic activity">
    <reaction evidence="1">
        <text>5-(2-hydroxyethyl)-4-methylthiazole + ATP = 4-methyl-5-(2-phosphooxyethyl)-thiazole + ADP + H(+)</text>
        <dbReference type="Rhea" id="RHEA:24212"/>
        <dbReference type="ChEBI" id="CHEBI:15378"/>
        <dbReference type="ChEBI" id="CHEBI:17957"/>
        <dbReference type="ChEBI" id="CHEBI:30616"/>
        <dbReference type="ChEBI" id="CHEBI:58296"/>
        <dbReference type="ChEBI" id="CHEBI:456216"/>
        <dbReference type="EC" id="2.7.1.50"/>
    </reaction>
</comment>
<comment type="cofactor">
    <cofactor evidence="1">
        <name>Mg(2+)</name>
        <dbReference type="ChEBI" id="CHEBI:18420"/>
    </cofactor>
</comment>
<comment type="pathway">
    <text evidence="1">Cofactor biosynthesis; thiamine diphosphate biosynthesis; 4-methyl-5-(2-phosphoethyl)-thiazole from 5-(2-hydroxyethyl)-4-methylthiazole: step 1/1.</text>
</comment>
<comment type="similarity">
    <text evidence="1">Belongs to the Thz kinase family.</text>
</comment>
<sequence length="264" mass="27334">MQKYAQILDLVRERNPLVHQITNYVTVNDCANMTICFGASPVMSHAPEDVVDMIKIASALVLNIGTLDEKQIEGMIAAANEAKKCGIPIVLDPVGAGATLYRTQTAERFMNEFPLAVIKGNAGEIGTLAGVSATVRGVDSGNISGDPKEIAHSLAKEYGCTVVISGAEDIISDGKRIAGVLNGVPIMGKISGTGCMASAVCGACAAVSDSMDGCITAMAALGIAGEEAAKTAKGPGSFKPAFFDAVTSLTNEQFIKSARISEYQ</sequence>
<gene>
    <name evidence="1" type="primary">thiM</name>
    <name type="ordered locus">Mlab_1656</name>
</gene>
<feature type="chain" id="PRO_0000336578" description="Hydroxyethylthiazole kinase">
    <location>
        <begin position="1"/>
        <end position="264"/>
    </location>
</feature>
<feature type="binding site" evidence="1">
    <location>
        <position position="43"/>
    </location>
    <ligand>
        <name>substrate</name>
    </ligand>
</feature>
<feature type="binding site" evidence="1">
    <location>
        <position position="119"/>
    </location>
    <ligand>
        <name>ATP</name>
        <dbReference type="ChEBI" id="CHEBI:30616"/>
    </ligand>
</feature>
<feature type="binding site" evidence="1">
    <location>
        <position position="165"/>
    </location>
    <ligand>
        <name>ATP</name>
        <dbReference type="ChEBI" id="CHEBI:30616"/>
    </ligand>
</feature>
<feature type="binding site" evidence="1">
    <location>
        <position position="192"/>
    </location>
    <ligand>
        <name>substrate</name>
    </ligand>
</feature>
<proteinExistence type="inferred from homology"/>
<accession>A2SU11</accession>
<organism>
    <name type="scientific">Methanocorpusculum labreanum (strain ATCC 43576 / DSM 4855 / Z)</name>
    <dbReference type="NCBI Taxonomy" id="410358"/>
    <lineage>
        <taxon>Archaea</taxon>
        <taxon>Methanobacteriati</taxon>
        <taxon>Methanobacteriota</taxon>
        <taxon>Stenosarchaea group</taxon>
        <taxon>Methanomicrobia</taxon>
        <taxon>Methanomicrobiales</taxon>
        <taxon>Methanocorpusculaceae</taxon>
        <taxon>Methanocorpusculum</taxon>
    </lineage>
</organism>
<protein>
    <recommendedName>
        <fullName evidence="1">Hydroxyethylthiazole kinase</fullName>
        <ecNumber evidence="1">2.7.1.50</ecNumber>
    </recommendedName>
    <alternativeName>
        <fullName evidence="1">4-methyl-5-beta-hydroxyethylthiazole kinase</fullName>
        <shortName evidence="1">TH kinase</shortName>
        <shortName evidence="1">Thz kinase</shortName>
    </alternativeName>
</protein>
<reference key="1">
    <citation type="journal article" date="2009" name="Stand. Genomic Sci.">
        <title>Complete genome sequence of Methanocorpusculum labreanum type strain Z.</title>
        <authorList>
            <person name="Anderson I.J."/>
            <person name="Sieprawska-Lupa M."/>
            <person name="Goltsman E."/>
            <person name="Lapidus A."/>
            <person name="Copeland A."/>
            <person name="Glavina Del Rio T."/>
            <person name="Tice H."/>
            <person name="Dalin E."/>
            <person name="Barry K."/>
            <person name="Pitluck S."/>
            <person name="Hauser L."/>
            <person name="Land M."/>
            <person name="Lucas S."/>
            <person name="Richardson P."/>
            <person name="Whitman W.B."/>
            <person name="Kyrpides N.C."/>
        </authorList>
    </citation>
    <scope>NUCLEOTIDE SEQUENCE [LARGE SCALE GENOMIC DNA]</scope>
    <source>
        <strain>ATCC 43576 / DSM 4855 / Z</strain>
    </source>
</reference>
<evidence type="ECO:0000255" key="1">
    <source>
        <dbReference type="HAMAP-Rule" id="MF_00228"/>
    </source>
</evidence>